<reference key="1">
    <citation type="journal article" date="2008" name="J. Bacteriol.">
        <title>The complete genome sequence of Actinobacillus pleuropneumoniae L20 (serotype 5b).</title>
        <authorList>
            <person name="Foote S.J."/>
            <person name="Bosse J.T."/>
            <person name="Bouevitch A.B."/>
            <person name="Langford P.R."/>
            <person name="Young N.M."/>
            <person name="Nash J.H.E."/>
        </authorList>
    </citation>
    <scope>NUCLEOTIDE SEQUENCE [LARGE SCALE GENOMIC DNA]</scope>
    <source>
        <strain>L20</strain>
    </source>
</reference>
<dbReference type="EMBL" id="CP000569">
    <property type="protein sequence ID" value="ABN73741.1"/>
    <property type="molecule type" value="Genomic_DNA"/>
</dbReference>
<dbReference type="RefSeq" id="WP_005600786.1">
    <property type="nucleotide sequence ID" value="NC_009053.1"/>
</dbReference>
<dbReference type="SMR" id="A3N005"/>
<dbReference type="STRING" id="416269.APL_0639"/>
<dbReference type="EnsemblBacteria" id="ABN73741">
    <property type="protein sequence ID" value="ABN73741"/>
    <property type="gene ID" value="APL_0639"/>
</dbReference>
<dbReference type="KEGG" id="apl:APL_0639"/>
<dbReference type="eggNOG" id="COG0532">
    <property type="taxonomic scope" value="Bacteria"/>
</dbReference>
<dbReference type="HOGENOM" id="CLU_006301_6_3_6"/>
<dbReference type="Proteomes" id="UP000001432">
    <property type="component" value="Chromosome"/>
</dbReference>
<dbReference type="GO" id="GO:0005829">
    <property type="term" value="C:cytosol"/>
    <property type="evidence" value="ECO:0007669"/>
    <property type="project" value="TreeGrafter"/>
</dbReference>
<dbReference type="GO" id="GO:0005525">
    <property type="term" value="F:GTP binding"/>
    <property type="evidence" value="ECO:0007669"/>
    <property type="project" value="UniProtKB-KW"/>
</dbReference>
<dbReference type="GO" id="GO:0003924">
    <property type="term" value="F:GTPase activity"/>
    <property type="evidence" value="ECO:0007669"/>
    <property type="project" value="UniProtKB-UniRule"/>
</dbReference>
<dbReference type="GO" id="GO:0097216">
    <property type="term" value="F:guanosine tetraphosphate binding"/>
    <property type="evidence" value="ECO:0007669"/>
    <property type="project" value="UniProtKB-ARBA"/>
</dbReference>
<dbReference type="GO" id="GO:0003743">
    <property type="term" value="F:translation initiation factor activity"/>
    <property type="evidence" value="ECO:0007669"/>
    <property type="project" value="UniProtKB-UniRule"/>
</dbReference>
<dbReference type="CDD" id="cd01887">
    <property type="entry name" value="IF2_eIF5B"/>
    <property type="match status" value="1"/>
</dbReference>
<dbReference type="CDD" id="cd03702">
    <property type="entry name" value="IF2_mtIF2_II"/>
    <property type="match status" value="1"/>
</dbReference>
<dbReference type="CDD" id="cd03692">
    <property type="entry name" value="mtIF2_IVc"/>
    <property type="match status" value="1"/>
</dbReference>
<dbReference type="FunFam" id="2.40.30.10:FF:000007">
    <property type="entry name" value="Translation initiation factor IF-2"/>
    <property type="match status" value="1"/>
</dbReference>
<dbReference type="FunFam" id="2.40.30.10:FF:000008">
    <property type="entry name" value="Translation initiation factor IF-2"/>
    <property type="match status" value="1"/>
</dbReference>
<dbReference type="FunFam" id="3.40.50.10050:FF:000001">
    <property type="entry name" value="Translation initiation factor IF-2"/>
    <property type="match status" value="1"/>
</dbReference>
<dbReference type="FunFam" id="3.40.50.300:FF:000019">
    <property type="entry name" value="Translation initiation factor IF-2"/>
    <property type="match status" value="1"/>
</dbReference>
<dbReference type="Gene3D" id="3.40.50.300">
    <property type="entry name" value="P-loop containing nucleotide triphosphate hydrolases"/>
    <property type="match status" value="1"/>
</dbReference>
<dbReference type="Gene3D" id="2.40.30.10">
    <property type="entry name" value="Translation factors"/>
    <property type="match status" value="2"/>
</dbReference>
<dbReference type="Gene3D" id="3.40.50.10050">
    <property type="entry name" value="Translation initiation factor IF- 2, domain 3"/>
    <property type="match status" value="1"/>
</dbReference>
<dbReference type="HAMAP" id="MF_00100_B">
    <property type="entry name" value="IF_2_B"/>
    <property type="match status" value="1"/>
</dbReference>
<dbReference type="InterPro" id="IPR053905">
    <property type="entry name" value="EF-G-like_DII"/>
</dbReference>
<dbReference type="InterPro" id="IPR004161">
    <property type="entry name" value="EFTu-like_2"/>
</dbReference>
<dbReference type="InterPro" id="IPR044145">
    <property type="entry name" value="IF2_II"/>
</dbReference>
<dbReference type="InterPro" id="IPR006847">
    <property type="entry name" value="IF2_N"/>
</dbReference>
<dbReference type="InterPro" id="IPR027417">
    <property type="entry name" value="P-loop_NTPase"/>
</dbReference>
<dbReference type="InterPro" id="IPR005225">
    <property type="entry name" value="Small_GTP-bd"/>
</dbReference>
<dbReference type="InterPro" id="IPR000795">
    <property type="entry name" value="T_Tr_GTP-bd_dom"/>
</dbReference>
<dbReference type="InterPro" id="IPR000178">
    <property type="entry name" value="TF_IF2_bacterial-like"/>
</dbReference>
<dbReference type="InterPro" id="IPR015760">
    <property type="entry name" value="TIF_IF2"/>
</dbReference>
<dbReference type="InterPro" id="IPR023115">
    <property type="entry name" value="TIF_IF2_dom3"/>
</dbReference>
<dbReference type="InterPro" id="IPR036925">
    <property type="entry name" value="TIF_IF2_dom3_sf"/>
</dbReference>
<dbReference type="InterPro" id="IPR009000">
    <property type="entry name" value="Transl_B-barrel_sf"/>
</dbReference>
<dbReference type="NCBIfam" id="TIGR00487">
    <property type="entry name" value="IF-2"/>
    <property type="match status" value="1"/>
</dbReference>
<dbReference type="NCBIfam" id="TIGR00231">
    <property type="entry name" value="small_GTP"/>
    <property type="match status" value="1"/>
</dbReference>
<dbReference type="PANTHER" id="PTHR43381:SF5">
    <property type="entry name" value="TR-TYPE G DOMAIN-CONTAINING PROTEIN"/>
    <property type="match status" value="1"/>
</dbReference>
<dbReference type="PANTHER" id="PTHR43381">
    <property type="entry name" value="TRANSLATION INITIATION FACTOR IF-2-RELATED"/>
    <property type="match status" value="1"/>
</dbReference>
<dbReference type="Pfam" id="PF22042">
    <property type="entry name" value="EF-G_D2"/>
    <property type="match status" value="1"/>
</dbReference>
<dbReference type="Pfam" id="PF00009">
    <property type="entry name" value="GTP_EFTU"/>
    <property type="match status" value="1"/>
</dbReference>
<dbReference type="Pfam" id="PF03144">
    <property type="entry name" value="GTP_EFTU_D2"/>
    <property type="match status" value="1"/>
</dbReference>
<dbReference type="Pfam" id="PF11987">
    <property type="entry name" value="IF-2"/>
    <property type="match status" value="1"/>
</dbReference>
<dbReference type="Pfam" id="PF04760">
    <property type="entry name" value="IF2_N"/>
    <property type="match status" value="1"/>
</dbReference>
<dbReference type="SUPFAM" id="SSF52156">
    <property type="entry name" value="Initiation factor IF2/eIF5b, domain 3"/>
    <property type="match status" value="1"/>
</dbReference>
<dbReference type="SUPFAM" id="SSF52540">
    <property type="entry name" value="P-loop containing nucleoside triphosphate hydrolases"/>
    <property type="match status" value="1"/>
</dbReference>
<dbReference type="SUPFAM" id="SSF50447">
    <property type="entry name" value="Translation proteins"/>
    <property type="match status" value="2"/>
</dbReference>
<dbReference type="PROSITE" id="PS51722">
    <property type="entry name" value="G_TR_2"/>
    <property type="match status" value="1"/>
</dbReference>
<dbReference type="PROSITE" id="PS01176">
    <property type="entry name" value="IF2"/>
    <property type="match status" value="1"/>
</dbReference>
<name>IF2_ACTP2</name>
<gene>
    <name evidence="2" type="primary">infB</name>
    <name type="ordered locus">APL_0639</name>
</gene>
<keyword id="KW-0963">Cytoplasm</keyword>
<keyword id="KW-0342">GTP-binding</keyword>
<keyword id="KW-0396">Initiation factor</keyword>
<keyword id="KW-0547">Nucleotide-binding</keyword>
<keyword id="KW-0648">Protein biosynthesis</keyword>
<keyword id="KW-1185">Reference proteome</keyword>
<organism>
    <name type="scientific">Actinobacillus pleuropneumoniae serotype 5b (strain L20)</name>
    <dbReference type="NCBI Taxonomy" id="416269"/>
    <lineage>
        <taxon>Bacteria</taxon>
        <taxon>Pseudomonadati</taxon>
        <taxon>Pseudomonadota</taxon>
        <taxon>Gammaproteobacteria</taxon>
        <taxon>Pasteurellales</taxon>
        <taxon>Pasteurellaceae</taxon>
        <taxon>Actinobacillus</taxon>
    </lineage>
</organism>
<proteinExistence type="inferred from homology"/>
<sequence>MSDNEIKNEAPKKLSLQRRTKTTVADGKVQVEVRKSRKIDTAAVKKAQEEAALKAKQEAEAKAQAEKTAAEQAKAEAEAAKKAEGAKVEATKKSAPAVPVMPNSKPKAAAPKAEQPKQEKALDPEKEAKKKEEAELRRKQEELARQKAEMEAKRAAENARRLAEIAREEAAENGEEFEDDRFTSSYAREADRDNDRRSEANRGRGKGGVNKAKKGDREDKNERNADRRNQKDVKGKGKNAKKGSALQQAFTKPVQVNKADVVIGETITVAELANKMAVKATEIIKTMMKMGEMVTINQVIDQETAQLVAEEMGHKVILRNENELEDAVMEDRDVDAEKVTRAPVVTIMGHVDHGKTSLLDYIRKAKVAAGEAGGITQHIGAYHVETEDGKMITFLDTPGHAAFTSMRARGAKATDIVVLVVAADDGVMPQTIEAIQHARAAGAPIVVAVNKIDKPEANPDRVEQELLQHEVVSEKFGGDVQFVPVSAKKGLGIDDLLEAILLQSEVLELTAVKEGMASGVVIESYLDKGRGPVATILVQSGTLNKGDIVLCGFEYGRVRAMRDENGKEVDSAGPSIPVEVLGLSGVPAAGDEATVVRDEKKAREVALFRQGKFREVKLARQQKAKLENMFSNMTAGDVAELNVIVKADVQGSVEAICQSLAELSTDEVKVKVVGSGVGGITETDATLAAASNAIMVGFNVRADASARRVIEAENIDLRYYSIIYELLNEIKAAMSGMLQPEFKQEIIGLAEVRDVFRHPKFGAIAGCMVTEGVVKRNNPIRVLRDNVVIFEGELESLRRFKDDVSEVRNGMECGIGVKNYNDVKVGDQIEVFEVVEVKRSI</sequence>
<accession>A3N005</accession>
<feature type="chain" id="PRO_1000008190" description="Translation initiation factor IF-2">
    <location>
        <begin position="1"/>
        <end position="841"/>
    </location>
</feature>
<feature type="domain" description="tr-type G">
    <location>
        <begin position="340"/>
        <end position="510"/>
    </location>
</feature>
<feature type="region of interest" description="Disordered" evidence="3">
    <location>
        <begin position="1"/>
        <end position="24"/>
    </location>
</feature>
<feature type="region of interest" description="Disordered" evidence="3">
    <location>
        <begin position="52"/>
        <end position="246"/>
    </location>
</feature>
<feature type="region of interest" description="G1" evidence="1">
    <location>
        <begin position="349"/>
        <end position="356"/>
    </location>
</feature>
<feature type="region of interest" description="G2" evidence="1">
    <location>
        <begin position="374"/>
        <end position="378"/>
    </location>
</feature>
<feature type="region of interest" description="G3" evidence="1">
    <location>
        <begin position="396"/>
        <end position="399"/>
    </location>
</feature>
<feature type="region of interest" description="G4" evidence="1">
    <location>
        <begin position="450"/>
        <end position="453"/>
    </location>
</feature>
<feature type="region of interest" description="G5" evidence="1">
    <location>
        <begin position="486"/>
        <end position="488"/>
    </location>
</feature>
<feature type="compositionally biased region" description="Basic and acidic residues" evidence="3">
    <location>
        <begin position="1"/>
        <end position="12"/>
    </location>
</feature>
<feature type="compositionally biased region" description="Basic and acidic residues" evidence="3">
    <location>
        <begin position="52"/>
        <end position="92"/>
    </location>
</feature>
<feature type="compositionally biased region" description="Basic and acidic residues" evidence="3">
    <location>
        <begin position="114"/>
        <end position="170"/>
    </location>
</feature>
<feature type="compositionally biased region" description="Basic and acidic residues" evidence="3">
    <location>
        <begin position="188"/>
        <end position="202"/>
    </location>
</feature>
<feature type="compositionally biased region" description="Basic and acidic residues" evidence="3">
    <location>
        <begin position="213"/>
        <end position="235"/>
    </location>
</feature>
<feature type="binding site" evidence="2">
    <location>
        <begin position="349"/>
        <end position="356"/>
    </location>
    <ligand>
        <name>GTP</name>
        <dbReference type="ChEBI" id="CHEBI:37565"/>
    </ligand>
</feature>
<feature type="binding site" evidence="2">
    <location>
        <begin position="396"/>
        <end position="400"/>
    </location>
    <ligand>
        <name>GTP</name>
        <dbReference type="ChEBI" id="CHEBI:37565"/>
    </ligand>
</feature>
<feature type="binding site" evidence="2">
    <location>
        <begin position="450"/>
        <end position="453"/>
    </location>
    <ligand>
        <name>GTP</name>
        <dbReference type="ChEBI" id="CHEBI:37565"/>
    </ligand>
</feature>
<protein>
    <recommendedName>
        <fullName evidence="2">Translation initiation factor IF-2</fullName>
    </recommendedName>
</protein>
<evidence type="ECO:0000250" key="1"/>
<evidence type="ECO:0000255" key="2">
    <source>
        <dbReference type="HAMAP-Rule" id="MF_00100"/>
    </source>
</evidence>
<evidence type="ECO:0000256" key="3">
    <source>
        <dbReference type="SAM" id="MobiDB-lite"/>
    </source>
</evidence>
<comment type="function">
    <text evidence="2">One of the essential components for the initiation of protein synthesis. Protects formylmethionyl-tRNA from spontaneous hydrolysis and promotes its binding to the 30S ribosomal subunits. Also involved in the hydrolysis of GTP during the formation of the 70S ribosomal complex.</text>
</comment>
<comment type="subcellular location">
    <subcellularLocation>
        <location evidence="2">Cytoplasm</location>
    </subcellularLocation>
</comment>
<comment type="similarity">
    <text evidence="2">Belongs to the TRAFAC class translation factor GTPase superfamily. Classic translation factor GTPase family. IF-2 subfamily.</text>
</comment>